<organism>
    <name type="scientific">Escherichia coli O157:H7</name>
    <dbReference type="NCBI Taxonomy" id="83334"/>
    <lineage>
        <taxon>Bacteria</taxon>
        <taxon>Pseudomonadati</taxon>
        <taxon>Pseudomonadota</taxon>
        <taxon>Gammaproteobacteria</taxon>
        <taxon>Enterobacterales</taxon>
        <taxon>Enterobacteriaceae</taxon>
        <taxon>Escherichia</taxon>
    </lineage>
</organism>
<sequence>MESTPKKAPRSKFPALLVVALALVALVFVIWRVDSAPSTNDAYVSADTIDVVPEVSGRIVELAVTDNQAVKQGDLLFRIDPRPYEANLAKSEASLAALDKQIMLTQRSVDAQQFGADSVNATVEKARAAAKQATDTLRRTEPLLKEGFVSAEDVDRARTAQRAAEADLNAVLLQAQSAASAVSGVDALVAQRAAVEADIALTKLHLEMATVRAPFDGRVISLKTSVGQFASAMRPIFTLIDTRHWYVIANFRETDLKNIRSGTPATIRLMSDSGKTFEGKVDSIGYGVLPDDGGLVLGGLPKVSRSINWVRVAQRFPVKIMVDKPDPEMFRIGASAVANLEPQ</sequence>
<protein>
    <recommendedName>
        <fullName>Multidrug resistance protein MdtN</fullName>
    </recommendedName>
</protein>
<name>MDTN_ECO57</name>
<reference key="1">
    <citation type="journal article" date="2001" name="Nature">
        <title>Genome sequence of enterohaemorrhagic Escherichia coli O157:H7.</title>
        <authorList>
            <person name="Perna N.T."/>
            <person name="Plunkett G. III"/>
            <person name="Burland V."/>
            <person name="Mau B."/>
            <person name="Glasner J.D."/>
            <person name="Rose D.J."/>
            <person name="Mayhew G.F."/>
            <person name="Evans P.S."/>
            <person name="Gregor J."/>
            <person name="Kirkpatrick H.A."/>
            <person name="Posfai G."/>
            <person name="Hackett J."/>
            <person name="Klink S."/>
            <person name="Boutin A."/>
            <person name="Shao Y."/>
            <person name="Miller L."/>
            <person name="Grotbeck E.J."/>
            <person name="Davis N.W."/>
            <person name="Lim A."/>
            <person name="Dimalanta E.T."/>
            <person name="Potamousis K."/>
            <person name="Apodaca J."/>
            <person name="Anantharaman T.S."/>
            <person name="Lin J."/>
            <person name="Yen G."/>
            <person name="Schwartz D.C."/>
            <person name="Welch R.A."/>
            <person name="Blattner F.R."/>
        </authorList>
    </citation>
    <scope>NUCLEOTIDE SEQUENCE [LARGE SCALE GENOMIC DNA]</scope>
    <source>
        <strain>O157:H7 / EDL933 / ATCC 700927 / EHEC</strain>
    </source>
</reference>
<reference key="2">
    <citation type="journal article" date="2001" name="DNA Res.">
        <title>Complete genome sequence of enterohemorrhagic Escherichia coli O157:H7 and genomic comparison with a laboratory strain K-12.</title>
        <authorList>
            <person name="Hayashi T."/>
            <person name="Makino K."/>
            <person name="Ohnishi M."/>
            <person name="Kurokawa K."/>
            <person name="Ishii K."/>
            <person name="Yokoyama K."/>
            <person name="Han C.-G."/>
            <person name="Ohtsubo E."/>
            <person name="Nakayama K."/>
            <person name="Murata T."/>
            <person name="Tanaka M."/>
            <person name="Tobe T."/>
            <person name="Iida T."/>
            <person name="Takami H."/>
            <person name="Honda T."/>
            <person name="Sasakawa C."/>
            <person name="Ogasawara N."/>
            <person name="Yasunaga T."/>
            <person name="Kuhara S."/>
            <person name="Shiba T."/>
            <person name="Hattori M."/>
            <person name="Shinagawa H."/>
        </authorList>
    </citation>
    <scope>NUCLEOTIDE SEQUENCE [LARGE SCALE GENOMIC DNA]</scope>
    <source>
        <strain>O157:H7 / Sakai / RIMD 0509952 / EHEC</strain>
    </source>
</reference>
<gene>
    <name type="primary">mdtN</name>
    <name type="ordered locus">Z5682</name>
    <name type="ordered locus">ECs5064</name>
</gene>
<comment type="function">
    <text evidence="1">Could be involved in resistance to puromycin, acriflavine and tetraphenylarsonium chloride.</text>
</comment>
<comment type="subunit">
    <text evidence="1">Could be part of a tripartite efflux system composed of MdtN, MdtO and MdtP.</text>
</comment>
<comment type="subcellular location">
    <subcellularLocation>
        <location evidence="3">Cell inner membrane</location>
        <topology evidence="3">Single-pass type II membrane protein</topology>
    </subcellularLocation>
</comment>
<comment type="similarity">
    <text evidence="3">Belongs to the membrane fusion protein (MFP) (TC 8.A.1) family.</text>
</comment>
<dbReference type="EMBL" id="AE005174">
    <property type="protein sequence ID" value="AAG59280.1"/>
    <property type="molecule type" value="Genomic_DNA"/>
</dbReference>
<dbReference type="EMBL" id="BA000007">
    <property type="protein sequence ID" value="BAB38487.1"/>
    <property type="molecule type" value="Genomic_DNA"/>
</dbReference>
<dbReference type="PIR" id="D86102">
    <property type="entry name" value="D86102"/>
</dbReference>
<dbReference type="PIR" id="H91261">
    <property type="entry name" value="H91261"/>
</dbReference>
<dbReference type="RefSeq" id="NP_313091.1">
    <property type="nucleotide sequence ID" value="NC_002695.1"/>
</dbReference>
<dbReference type="RefSeq" id="WP_000446391.1">
    <property type="nucleotide sequence ID" value="NZ_VOAI01000008.1"/>
</dbReference>
<dbReference type="SMR" id="Q8X5R2"/>
<dbReference type="STRING" id="155864.Z5682"/>
<dbReference type="GeneID" id="914275"/>
<dbReference type="KEGG" id="ece:Z5682"/>
<dbReference type="KEGG" id="ecs:ECs_5064"/>
<dbReference type="PATRIC" id="fig|386585.9.peg.5292"/>
<dbReference type="eggNOG" id="COG1566">
    <property type="taxonomic scope" value="Bacteria"/>
</dbReference>
<dbReference type="HOGENOM" id="CLU_018816_15_2_6"/>
<dbReference type="OMA" id="WARIDIE"/>
<dbReference type="Proteomes" id="UP000000558">
    <property type="component" value="Chromosome"/>
</dbReference>
<dbReference type="Proteomes" id="UP000002519">
    <property type="component" value="Chromosome"/>
</dbReference>
<dbReference type="GO" id="GO:0005886">
    <property type="term" value="C:plasma membrane"/>
    <property type="evidence" value="ECO:0007669"/>
    <property type="project" value="UniProtKB-SubCell"/>
</dbReference>
<dbReference type="GO" id="GO:0042910">
    <property type="term" value="F:xenobiotic transmembrane transporter activity"/>
    <property type="evidence" value="ECO:0007669"/>
    <property type="project" value="InterPro"/>
</dbReference>
<dbReference type="GO" id="GO:0046677">
    <property type="term" value="P:response to antibiotic"/>
    <property type="evidence" value="ECO:0007669"/>
    <property type="project" value="UniProtKB-KW"/>
</dbReference>
<dbReference type="GO" id="GO:1990961">
    <property type="term" value="P:xenobiotic detoxification by transmembrane export across the plasma membrane"/>
    <property type="evidence" value="ECO:0007669"/>
    <property type="project" value="InterPro"/>
</dbReference>
<dbReference type="FunFam" id="2.40.30.170:FF:000008">
    <property type="entry name" value="Multidrug resistance protein MdtN"/>
    <property type="match status" value="1"/>
</dbReference>
<dbReference type="Gene3D" id="2.40.30.170">
    <property type="match status" value="1"/>
</dbReference>
<dbReference type="Gene3D" id="2.40.50.100">
    <property type="match status" value="1"/>
</dbReference>
<dbReference type="Gene3D" id="1.10.287.470">
    <property type="entry name" value="Helix hairpin bin"/>
    <property type="match status" value="1"/>
</dbReference>
<dbReference type="InterPro" id="IPR043602">
    <property type="entry name" value="CusB-like_dom_1"/>
</dbReference>
<dbReference type="InterPro" id="IPR032317">
    <property type="entry name" value="CusB_D23"/>
</dbReference>
<dbReference type="InterPro" id="IPR050393">
    <property type="entry name" value="MFP_Efflux_Pump"/>
</dbReference>
<dbReference type="InterPro" id="IPR005694">
    <property type="entry name" value="MFP_proteobact"/>
</dbReference>
<dbReference type="NCBIfam" id="TIGR00998">
    <property type="entry name" value="8a0101"/>
    <property type="match status" value="1"/>
</dbReference>
<dbReference type="NCBIfam" id="NF007785">
    <property type="entry name" value="PRK10476.1"/>
    <property type="match status" value="1"/>
</dbReference>
<dbReference type="PANTHER" id="PTHR30367:SF1">
    <property type="entry name" value="MULTIDRUG RESISTANCE PROTEIN MDTN"/>
    <property type="match status" value="1"/>
</dbReference>
<dbReference type="PANTHER" id="PTHR30367">
    <property type="entry name" value="P-HYDROXYBENZOIC ACID EFFLUX PUMP SUBUNIT AAEA-RELATED"/>
    <property type="match status" value="1"/>
</dbReference>
<dbReference type="Pfam" id="PF00529">
    <property type="entry name" value="CusB_dom_1"/>
    <property type="match status" value="1"/>
</dbReference>
<dbReference type="Pfam" id="PF16576">
    <property type="entry name" value="HlyD_D23"/>
    <property type="match status" value="1"/>
</dbReference>
<dbReference type="SUPFAM" id="SSF111369">
    <property type="entry name" value="HlyD-like secretion proteins"/>
    <property type="match status" value="3"/>
</dbReference>
<feature type="chain" id="PRO_0000201884" description="Multidrug resistance protein MdtN">
    <location>
        <begin position="1"/>
        <end position="343"/>
    </location>
</feature>
<feature type="topological domain" description="Cytoplasmic" evidence="2">
    <location>
        <begin position="1"/>
        <end position="12"/>
    </location>
</feature>
<feature type="transmembrane region" description="Helical; Signal-anchor for type II membrane protein" evidence="2">
    <location>
        <begin position="13"/>
        <end position="33"/>
    </location>
</feature>
<feature type="topological domain" description="Periplasmic" evidence="2">
    <location>
        <begin position="34"/>
        <end position="343"/>
    </location>
</feature>
<accession>Q8X5R2</accession>
<accession>Q7A913</accession>
<evidence type="ECO:0000250" key="1"/>
<evidence type="ECO:0000255" key="2"/>
<evidence type="ECO:0000305" key="3"/>
<proteinExistence type="inferred from homology"/>
<keyword id="KW-0046">Antibiotic resistance</keyword>
<keyword id="KW-0997">Cell inner membrane</keyword>
<keyword id="KW-1003">Cell membrane</keyword>
<keyword id="KW-0472">Membrane</keyword>
<keyword id="KW-1185">Reference proteome</keyword>
<keyword id="KW-0735">Signal-anchor</keyword>
<keyword id="KW-0812">Transmembrane</keyword>
<keyword id="KW-1133">Transmembrane helix</keyword>
<keyword id="KW-0813">Transport</keyword>